<accession>Q8VWI7</accession>
<accession>O23291</accession>
<accession>Q0WT18</accession>
<name>KN10A_ARATH</name>
<organism>
    <name type="scientific">Arabidopsis thaliana</name>
    <name type="common">Mouse-ear cress</name>
    <dbReference type="NCBI Taxonomy" id="3702"/>
    <lineage>
        <taxon>Eukaryota</taxon>
        <taxon>Viridiplantae</taxon>
        <taxon>Streptophyta</taxon>
        <taxon>Embryophyta</taxon>
        <taxon>Tracheophyta</taxon>
        <taxon>Spermatophyta</taxon>
        <taxon>Magnoliopsida</taxon>
        <taxon>eudicotyledons</taxon>
        <taxon>Gunneridae</taxon>
        <taxon>Pentapetalae</taxon>
        <taxon>rosids</taxon>
        <taxon>malvids</taxon>
        <taxon>Brassicales</taxon>
        <taxon>Brassicaceae</taxon>
        <taxon>Camelineae</taxon>
        <taxon>Arabidopsis</taxon>
    </lineage>
</organism>
<feature type="chain" id="PRO_0000437032" description="Kinesin-like protein KIN-10A">
    <location>
        <begin position="1"/>
        <end position="869"/>
    </location>
</feature>
<feature type="domain" description="Kinesin motor" evidence="2">
    <location>
        <begin position="48"/>
        <end position="367"/>
    </location>
</feature>
<feature type="region of interest" description="Disordered" evidence="3">
    <location>
        <begin position="1"/>
        <end position="50"/>
    </location>
</feature>
<feature type="coiled-coil region" evidence="1">
    <location>
        <begin position="393"/>
        <end position="515"/>
    </location>
</feature>
<feature type="compositionally biased region" description="Polar residues" evidence="3">
    <location>
        <begin position="1"/>
        <end position="36"/>
    </location>
</feature>
<feature type="compositionally biased region" description="Basic and acidic residues" evidence="3">
    <location>
        <begin position="38"/>
        <end position="50"/>
    </location>
</feature>
<feature type="binding site" evidence="2">
    <location>
        <begin position="129"/>
        <end position="136"/>
    </location>
    <ligand>
        <name>ATP</name>
        <dbReference type="ChEBI" id="CHEBI:30616"/>
    </ligand>
</feature>
<feature type="sequence conflict" description="In Ref. 5; BAE99730." evidence="7" ref="5">
    <original>S</original>
    <variation>Y</variation>
    <location>
        <position position="308"/>
    </location>
</feature>
<proteinExistence type="evidence at protein level"/>
<keyword id="KW-0067">ATP-binding</keyword>
<keyword id="KW-0175">Coiled coil</keyword>
<keyword id="KW-0963">Cytoplasm</keyword>
<keyword id="KW-0206">Cytoskeleton</keyword>
<keyword id="KW-0493">Microtubule</keyword>
<keyword id="KW-0505">Motor protein</keyword>
<keyword id="KW-0547">Nucleotide-binding</keyword>
<keyword id="KW-1185">Reference proteome</keyword>
<protein>
    <recommendedName>
        <fullName evidence="7">Kinesin-like protein KIN-10A</fullName>
    </recommendedName>
    <alternativeName>
        <fullName evidence="5">Phragmoplast-associated kinesin-related protein 2</fullName>
        <shortName evidence="5">AtPAKRP2</shortName>
    </alternativeName>
</protein>
<comment type="function">
    <text evidence="4">Probable plus end-directed motor protein that may contribute to the transport of Golgi-derived vesicles in the phragmoplast.</text>
</comment>
<comment type="subunit">
    <text evidence="4">Binds microtubules.</text>
</comment>
<comment type="subcellular location">
    <subcellularLocation>
        <location evidence="4">Cytoplasm</location>
    </subcellularLocation>
    <subcellularLocation>
        <location evidence="4">Cytoplasm</location>
        <location evidence="4">Cytoskeleton</location>
        <location evidence="4">Phragmoplast</location>
    </subcellularLocation>
    <text evidence="4">During interphase, present throughout the cytoplasm. Microtubule-associated during late anaphase.</text>
</comment>
<comment type="similarity">
    <text evidence="6">Belongs to the TRAFAC class myosin-kinesin ATPase superfamily. Kinesin family. KIN-10 subfamily.</text>
</comment>
<comment type="sequence caution" evidence="7">
    <conflict type="erroneous gene model prediction">
        <sequence resource="EMBL-CDS" id="CAB10212"/>
    </conflict>
</comment>
<comment type="sequence caution" evidence="7">
    <conflict type="erroneous gene model prediction">
        <sequence resource="EMBL-CDS" id="CAB78475"/>
    </conflict>
</comment>
<evidence type="ECO:0000255" key="1"/>
<evidence type="ECO:0000255" key="2">
    <source>
        <dbReference type="PROSITE-ProRule" id="PRU00283"/>
    </source>
</evidence>
<evidence type="ECO:0000256" key="3">
    <source>
        <dbReference type="SAM" id="MobiDB-lite"/>
    </source>
</evidence>
<evidence type="ECO:0000269" key="4">
    <source>
    </source>
</evidence>
<evidence type="ECO:0000303" key="5">
    <source>
    </source>
</evidence>
<evidence type="ECO:0000303" key="6">
    <source>
    </source>
</evidence>
<evidence type="ECO:0000305" key="7"/>
<evidence type="ECO:0000312" key="8">
    <source>
        <dbReference type="Araport" id="AT4G14330"/>
    </source>
</evidence>
<evidence type="ECO:0000312" key="9">
    <source>
        <dbReference type="EMBL" id="AAL32294.1"/>
    </source>
</evidence>
<evidence type="ECO:0000312" key="10">
    <source>
        <dbReference type="EMBL" id="CAB10212.1"/>
    </source>
</evidence>
<evidence type="ECO:0000312" key="11">
    <source>
        <dbReference type="EMBL" id="CAB78475.1"/>
    </source>
</evidence>
<sequence>MAPTPSSSRSNQTQYTLIRTPQTKQRLNFHSKTPNPDGSKDPSPPEHPVEVIGRIRDYPDRKEKSPSILQVNTDNQTVRVRADVGYRDFTLDGVSFSEQEGLEEFYKKFIEERIKGVKVGNKCTIMMYGPTGAGKSHTMFGCGKEPGIVYRSLRDILGDSDQDGVTFVQVTVLEVYNEEIYDLLSTNSSNNLGIGWPKGASTKVRLEVMGKKAKNASFISGTEAGKISKEIVKVEKRRIVKSTLCNERSSRSHCIIILDVPTVGGRLMLVDMAGSENIDQAGQTGFEAKMQTAKINQGNIALKRVVESIANGDSHVPFRDSKLTMLLQDSFEDDKSKILMILCASPDPKEMHKTLCTLEYGAKAKCIVRGSHTPNKDKYGGDESASAVILGSRIAAMDEFIIKLQSEKKQKEKERNEAQKQLKKKEEEVAALRSLLTQREACATNEEEIKEKVNERTQLLKSELDKKLEECRRMAEEFVEMERRRMEERIVQQQEELEMMRRRLEEIEVEFRRSNGGSVDETSGFAKRLRSLYSDDDPGMVKSMDLDMGDPEPVKQVWGAVSHQSSNTISSNFTNLLQPKPSENMLTQMYPDRVCLSTVFEEEEVEEEEEKVIVEDKSICLITTPMPSLNSEGLGKENCFNGADDKESASSRRLRIQNIFTLCGNQRELSQHSGQEEDQANIASPDKKDNQFFSITNKAEALAVEEAKENNISVDQRENGQLDIYVKWETAADNPRKLITTLRVTKDATLADLRKLIEIYLGSDNQAFTFLKLGEPCGAQVAKEKESTVQATSLPLCNGHAYLATLRPGKSSQHKSLQPASPLPLNPIENMMEVTPISKVTPNHQVDEFSSPNLVAHLSSTPFITLRRH</sequence>
<gene>
    <name evidence="7" type="primary">KIN10A</name>
    <name evidence="9" type="synonym">PAKRP2</name>
    <name evidence="8" type="ordered locus">At4g14330</name>
    <name evidence="10" type="ORF">dl3205w</name>
    <name evidence="11" type="ORF">FCAALL.179</name>
</gene>
<reference key="1">
    <citation type="journal article" date="2001" name="Plant Cell">
        <title>A novel plant kinesin-related protein specifically associates with the phragmoplast organelles.</title>
        <authorList>
            <person name="Lee Y.R."/>
            <person name="Giang H.M."/>
            <person name="Liu B."/>
        </authorList>
    </citation>
    <scope>NUCLEOTIDE SEQUENCE [GENOMIC DNA / MRNA]</scope>
    <scope>FUNCTION</scope>
    <scope>SUBCELLULAR LOCATION</scope>
    <scope>SUBUNIT</scope>
    <source>
        <strain>cv. Columbia</strain>
    </source>
</reference>
<reference key="2">
    <citation type="journal article" date="1998" name="Nature">
        <title>Analysis of 1.9 Mb of contiguous sequence from chromosome 4 of Arabidopsis thaliana.</title>
        <authorList>
            <person name="Bevan M."/>
            <person name="Bancroft I."/>
            <person name="Bent E."/>
            <person name="Love K."/>
            <person name="Goodman H.M."/>
            <person name="Dean C."/>
            <person name="Bergkamp R."/>
            <person name="Dirkse W."/>
            <person name="van Staveren M."/>
            <person name="Stiekema W."/>
            <person name="Drost L."/>
            <person name="Ridley P."/>
            <person name="Hudson S.-A."/>
            <person name="Patel K."/>
            <person name="Murphy G."/>
            <person name="Piffanelli P."/>
            <person name="Wedler H."/>
            <person name="Wedler E."/>
            <person name="Wambutt R."/>
            <person name="Weitzenegger T."/>
            <person name="Pohl T."/>
            <person name="Terryn N."/>
            <person name="Gielen J."/>
            <person name="Villarroel R."/>
            <person name="De Clercq R."/>
            <person name="van Montagu M."/>
            <person name="Lecharny A."/>
            <person name="Aubourg S."/>
            <person name="Gy I."/>
            <person name="Kreis M."/>
            <person name="Lao N."/>
            <person name="Kavanagh T."/>
            <person name="Hempel S."/>
            <person name="Kotter P."/>
            <person name="Entian K.-D."/>
            <person name="Rieger M."/>
            <person name="Schaefer M."/>
            <person name="Funk B."/>
            <person name="Mueller-Auer S."/>
            <person name="Silvey M."/>
            <person name="James R."/>
            <person name="Monfort A."/>
            <person name="Pons A."/>
            <person name="Puigdomenech P."/>
            <person name="Douka A."/>
            <person name="Voukelatou E."/>
            <person name="Milioni D."/>
            <person name="Hatzopoulos P."/>
            <person name="Piravandi E."/>
            <person name="Obermaier B."/>
            <person name="Hilbert H."/>
            <person name="Duesterhoeft A."/>
            <person name="Moores T."/>
            <person name="Jones J.D.G."/>
            <person name="Eneva T."/>
            <person name="Palme K."/>
            <person name="Benes V."/>
            <person name="Rechmann S."/>
            <person name="Ansorge W."/>
            <person name="Cooke R."/>
            <person name="Berger C."/>
            <person name="Delseny M."/>
            <person name="Voet M."/>
            <person name="Volckaert G."/>
            <person name="Mewes H.-W."/>
            <person name="Klosterman S."/>
            <person name="Schueller C."/>
            <person name="Chalwatzis N."/>
        </authorList>
    </citation>
    <scope>NUCLEOTIDE SEQUENCE [LARGE SCALE GENOMIC DNA]</scope>
    <source>
        <strain>cv. Columbia</strain>
    </source>
</reference>
<reference key="3">
    <citation type="journal article" date="1999" name="Nature">
        <title>Sequence and analysis of chromosome 4 of the plant Arabidopsis thaliana.</title>
        <authorList>
            <person name="Mayer K.F.X."/>
            <person name="Schueller C."/>
            <person name="Wambutt R."/>
            <person name="Murphy G."/>
            <person name="Volckaert G."/>
            <person name="Pohl T."/>
            <person name="Duesterhoeft A."/>
            <person name="Stiekema W."/>
            <person name="Entian K.-D."/>
            <person name="Terryn N."/>
            <person name="Harris B."/>
            <person name="Ansorge W."/>
            <person name="Brandt P."/>
            <person name="Grivell L.A."/>
            <person name="Rieger M."/>
            <person name="Weichselgartner M."/>
            <person name="de Simone V."/>
            <person name="Obermaier B."/>
            <person name="Mache R."/>
            <person name="Mueller M."/>
            <person name="Kreis M."/>
            <person name="Delseny M."/>
            <person name="Puigdomenech P."/>
            <person name="Watson M."/>
            <person name="Schmidtheini T."/>
            <person name="Reichert B."/>
            <person name="Portetelle D."/>
            <person name="Perez-Alonso M."/>
            <person name="Boutry M."/>
            <person name="Bancroft I."/>
            <person name="Vos P."/>
            <person name="Hoheisel J."/>
            <person name="Zimmermann W."/>
            <person name="Wedler H."/>
            <person name="Ridley P."/>
            <person name="Langham S.-A."/>
            <person name="McCullagh B."/>
            <person name="Bilham L."/>
            <person name="Robben J."/>
            <person name="van der Schueren J."/>
            <person name="Grymonprez B."/>
            <person name="Chuang Y.-J."/>
            <person name="Vandenbussche F."/>
            <person name="Braeken M."/>
            <person name="Weltjens I."/>
            <person name="Voet M."/>
            <person name="Bastiaens I."/>
            <person name="Aert R."/>
            <person name="Defoor E."/>
            <person name="Weitzenegger T."/>
            <person name="Bothe G."/>
            <person name="Ramsperger U."/>
            <person name="Hilbert H."/>
            <person name="Braun M."/>
            <person name="Holzer E."/>
            <person name="Brandt A."/>
            <person name="Peters S."/>
            <person name="van Staveren M."/>
            <person name="Dirkse W."/>
            <person name="Mooijman P."/>
            <person name="Klein Lankhorst R."/>
            <person name="Rose M."/>
            <person name="Hauf J."/>
            <person name="Koetter P."/>
            <person name="Berneiser S."/>
            <person name="Hempel S."/>
            <person name="Feldpausch M."/>
            <person name="Lamberth S."/>
            <person name="Van den Daele H."/>
            <person name="De Keyser A."/>
            <person name="Buysshaert C."/>
            <person name="Gielen J."/>
            <person name="Villarroel R."/>
            <person name="De Clercq R."/>
            <person name="van Montagu M."/>
            <person name="Rogers J."/>
            <person name="Cronin A."/>
            <person name="Quail M.A."/>
            <person name="Bray-Allen S."/>
            <person name="Clark L."/>
            <person name="Doggett J."/>
            <person name="Hall S."/>
            <person name="Kay M."/>
            <person name="Lennard N."/>
            <person name="McLay K."/>
            <person name="Mayes R."/>
            <person name="Pettett A."/>
            <person name="Rajandream M.A."/>
            <person name="Lyne M."/>
            <person name="Benes V."/>
            <person name="Rechmann S."/>
            <person name="Borkova D."/>
            <person name="Bloecker H."/>
            <person name="Scharfe M."/>
            <person name="Grimm M."/>
            <person name="Loehnert T.-H."/>
            <person name="Dose S."/>
            <person name="de Haan M."/>
            <person name="Maarse A.C."/>
            <person name="Schaefer M."/>
            <person name="Mueller-Auer S."/>
            <person name="Gabel C."/>
            <person name="Fuchs M."/>
            <person name="Fartmann B."/>
            <person name="Granderath K."/>
            <person name="Dauner D."/>
            <person name="Herzl A."/>
            <person name="Neumann S."/>
            <person name="Argiriou A."/>
            <person name="Vitale D."/>
            <person name="Liguori R."/>
            <person name="Piravandi E."/>
            <person name="Massenet O."/>
            <person name="Quigley F."/>
            <person name="Clabauld G."/>
            <person name="Muendlein A."/>
            <person name="Felber R."/>
            <person name="Schnabl S."/>
            <person name="Hiller R."/>
            <person name="Schmidt W."/>
            <person name="Lecharny A."/>
            <person name="Aubourg S."/>
            <person name="Chefdor F."/>
            <person name="Cooke R."/>
            <person name="Berger C."/>
            <person name="Monfort A."/>
            <person name="Casacuberta E."/>
            <person name="Gibbons T."/>
            <person name="Weber N."/>
            <person name="Vandenbol M."/>
            <person name="Bargues M."/>
            <person name="Terol J."/>
            <person name="Torres A."/>
            <person name="Perez-Perez A."/>
            <person name="Purnelle B."/>
            <person name="Bent E."/>
            <person name="Johnson S."/>
            <person name="Tacon D."/>
            <person name="Jesse T."/>
            <person name="Heijnen L."/>
            <person name="Schwarz S."/>
            <person name="Scholler P."/>
            <person name="Heber S."/>
            <person name="Francs P."/>
            <person name="Bielke C."/>
            <person name="Frishman D."/>
            <person name="Haase D."/>
            <person name="Lemcke K."/>
            <person name="Mewes H.-W."/>
            <person name="Stocker S."/>
            <person name="Zaccaria P."/>
            <person name="Bevan M."/>
            <person name="Wilson R.K."/>
            <person name="de la Bastide M."/>
            <person name="Habermann K."/>
            <person name="Parnell L."/>
            <person name="Dedhia N."/>
            <person name="Gnoj L."/>
            <person name="Schutz K."/>
            <person name="Huang E."/>
            <person name="Spiegel L."/>
            <person name="Sekhon M."/>
            <person name="Murray J."/>
            <person name="Sheet P."/>
            <person name="Cordes M."/>
            <person name="Abu-Threideh J."/>
            <person name="Stoneking T."/>
            <person name="Kalicki J."/>
            <person name="Graves T."/>
            <person name="Harmon G."/>
            <person name="Edwards J."/>
            <person name="Latreille P."/>
            <person name="Courtney L."/>
            <person name="Cloud J."/>
            <person name="Abbott A."/>
            <person name="Scott K."/>
            <person name="Johnson D."/>
            <person name="Minx P."/>
            <person name="Bentley D."/>
            <person name="Fulton B."/>
            <person name="Miller N."/>
            <person name="Greco T."/>
            <person name="Kemp K."/>
            <person name="Kramer J."/>
            <person name="Fulton L."/>
            <person name="Mardis E."/>
            <person name="Dante M."/>
            <person name="Pepin K."/>
            <person name="Hillier L.W."/>
            <person name="Nelson J."/>
            <person name="Spieth J."/>
            <person name="Ryan E."/>
            <person name="Andrews S."/>
            <person name="Geisel C."/>
            <person name="Layman D."/>
            <person name="Du H."/>
            <person name="Ali J."/>
            <person name="Berghoff A."/>
            <person name="Jones K."/>
            <person name="Drone K."/>
            <person name="Cotton M."/>
            <person name="Joshu C."/>
            <person name="Antonoiu B."/>
            <person name="Zidanic M."/>
            <person name="Strong C."/>
            <person name="Sun H."/>
            <person name="Lamar B."/>
            <person name="Yordan C."/>
            <person name="Ma P."/>
            <person name="Zhong J."/>
            <person name="Preston R."/>
            <person name="Vil D."/>
            <person name="Shekher M."/>
            <person name="Matero A."/>
            <person name="Shah R."/>
            <person name="Swaby I.K."/>
            <person name="O'Shaughnessy A."/>
            <person name="Rodriguez M."/>
            <person name="Hoffman J."/>
            <person name="Till S."/>
            <person name="Granat S."/>
            <person name="Shohdy N."/>
            <person name="Hasegawa A."/>
            <person name="Hameed A."/>
            <person name="Lodhi M."/>
            <person name="Johnson A."/>
            <person name="Chen E."/>
            <person name="Marra M.A."/>
            <person name="Martienssen R."/>
            <person name="McCombie W.R."/>
        </authorList>
    </citation>
    <scope>NUCLEOTIDE SEQUENCE [LARGE SCALE GENOMIC DNA]</scope>
    <source>
        <strain>cv. Columbia</strain>
    </source>
</reference>
<reference key="4">
    <citation type="journal article" date="2017" name="Plant J.">
        <title>Araport11: a complete reannotation of the Arabidopsis thaliana reference genome.</title>
        <authorList>
            <person name="Cheng C.Y."/>
            <person name="Krishnakumar V."/>
            <person name="Chan A.P."/>
            <person name="Thibaud-Nissen F."/>
            <person name="Schobel S."/>
            <person name="Town C.D."/>
        </authorList>
    </citation>
    <scope>GENOME REANNOTATION</scope>
    <source>
        <strain>cv. Columbia</strain>
    </source>
</reference>
<reference key="5">
    <citation type="submission" date="2006-07" db="EMBL/GenBank/DDBJ databases">
        <title>Large-scale analysis of RIKEN Arabidopsis full-length (RAFL) cDNAs.</title>
        <authorList>
            <person name="Totoki Y."/>
            <person name="Seki M."/>
            <person name="Ishida J."/>
            <person name="Nakajima M."/>
            <person name="Enju A."/>
            <person name="Kamiya A."/>
            <person name="Narusaka M."/>
            <person name="Shin-i T."/>
            <person name="Nakagawa M."/>
            <person name="Sakamoto N."/>
            <person name="Oishi K."/>
            <person name="Kohara Y."/>
            <person name="Kobayashi M."/>
            <person name="Toyoda A."/>
            <person name="Sakaki Y."/>
            <person name="Sakurai T."/>
            <person name="Iida K."/>
            <person name="Akiyama K."/>
            <person name="Satou M."/>
            <person name="Toyoda T."/>
            <person name="Konagaya A."/>
            <person name="Carninci P."/>
            <person name="Kawai J."/>
            <person name="Hayashizaki Y."/>
            <person name="Shinozaki K."/>
        </authorList>
    </citation>
    <scope>NUCLEOTIDE SEQUENCE [LARGE SCALE MRNA]</scope>
    <source>
        <strain>cv. Columbia</strain>
    </source>
</reference>
<reference key="6">
    <citation type="journal article" date="2001" name="BMC Genomics">
        <title>Kinesins in the Arabidopsis genome: a comparative analysis among eukaryotes.</title>
        <authorList>
            <person name="Reddy A.S."/>
            <person name="Day I.S."/>
        </authorList>
    </citation>
    <scope>GENE FAMILY</scope>
</reference>
<reference key="7">
    <citation type="journal article" date="2006" name="BMC Genomics">
        <title>Comprehensive comparative analysis of kinesins in photosynthetic eukaryotes.</title>
        <authorList>
            <person name="Richardson D.N."/>
            <person name="Simmons M.P."/>
            <person name="Reddy A.S."/>
        </authorList>
    </citation>
    <scope>GENE FAMILY</scope>
    <scope>NOMENCLATURE</scope>
</reference>
<reference key="8">
    <citation type="journal article" date="2012" name="Protoplasma">
        <title>Functions of the Arabidopsis kinesin superfamily of microtubule-based motor proteins.</title>
        <authorList>
            <person name="Zhu C."/>
            <person name="Dixit R."/>
        </authorList>
    </citation>
    <scope>REVIEW</scope>
</reference>
<dbReference type="EMBL" id="AF320248">
    <property type="protein sequence ID" value="AAL32293.1"/>
    <property type="molecule type" value="mRNA"/>
</dbReference>
<dbReference type="EMBL" id="AF320249">
    <property type="protein sequence ID" value="AAL32294.1"/>
    <property type="molecule type" value="Genomic_DNA"/>
</dbReference>
<dbReference type="EMBL" id="Z97336">
    <property type="protein sequence ID" value="CAB10212.1"/>
    <property type="status" value="ALT_SEQ"/>
    <property type="molecule type" value="Genomic_DNA"/>
</dbReference>
<dbReference type="EMBL" id="AL161538">
    <property type="protein sequence ID" value="CAB78475.1"/>
    <property type="status" value="ALT_SEQ"/>
    <property type="molecule type" value="Genomic_DNA"/>
</dbReference>
<dbReference type="EMBL" id="CP002687">
    <property type="protein sequence ID" value="AEE83420.1"/>
    <property type="molecule type" value="Genomic_DNA"/>
</dbReference>
<dbReference type="EMBL" id="AK227746">
    <property type="protein sequence ID" value="BAE99730.1"/>
    <property type="molecule type" value="mRNA"/>
</dbReference>
<dbReference type="PIR" id="B71405">
    <property type="entry name" value="B71405"/>
</dbReference>
<dbReference type="RefSeq" id="NP_567426.1">
    <property type="nucleotide sequence ID" value="NM_117510.5"/>
</dbReference>
<dbReference type="SMR" id="Q8VWI7"/>
<dbReference type="FunCoup" id="Q8VWI7">
    <property type="interactions" value="376"/>
</dbReference>
<dbReference type="STRING" id="3702.Q8VWI7"/>
<dbReference type="GlyGen" id="Q8VWI7">
    <property type="glycosylation" value="1 site"/>
</dbReference>
<dbReference type="iPTMnet" id="Q8VWI7"/>
<dbReference type="PaxDb" id="3702-AT4G14330.1"/>
<dbReference type="ProteomicsDB" id="230294"/>
<dbReference type="EnsemblPlants" id="AT4G14330.1">
    <property type="protein sequence ID" value="AT4G14330.1"/>
    <property type="gene ID" value="AT4G14330"/>
</dbReference>
<dbReference type="GeneID" id="827075"/>
<dbReference type="Gramene" id="AT4G14330.1">
    <property type="protein sequence ID" value="AT4G14330.1"/>
    <property type="gene ID" value="AT4G14330"/>
</dbReference>
<dbReference type="KEGG" id="ath:AT4G14330"/>
<dbReference type="Araport" id="AT4G14330"/>
<dbReference type="TAIR" id="AT4G14330">
    <property type="gene designation" value="PAKRP2"/>
</dbReference>
<dbReference type="eggNOG" id="KOG0243">
    <property type="taxonomic scope" value="Eukaryota"/>
</dbReference>
<dbReference type="HOGENOM" id="CLU_007191_0_0_1"/>
<dbReference type="InParanoid" id="Q8VWI7"/>
<dbReference type="OMA" id="MDMSIDF"/>
<dbReference type="PhylomeDB" id="Q8VWI7"/>
<dbReference type="PRO" id="PR:Q8VWI7"/>
<dbReference type="Proteomes" id="UP000006548">
    <property type="component" value="Chromosome 4"/>
</dbReference>
<dbReference type="ExpressionAtlas" id="Q8VWI7">
    <property type="expression patterns" value="baseline and differential"/>
</dbReference>
<dbReference type="GO" id="GO:0005737">
    <property type="term" value="C:cytoplasm"/>
    <property type="evidence" value="ECO:0000314"/>
    <property type="project" value="UniProtKB"/>
</dbReference>
<dbReference type="GO" id="GO:0005874">
    <property type="term" value="C:microtubule"/>
    <property type="evidence" value="ECO:0007669"/>
    <property type="project" value="UniProtKB-KW"/>
</dbReference>
<dbReference type="GO" id="GO:0009524">
    <property type="term" value="C:phragmoplast"/>
    <property type="evidence" value="ECO:0000314"/>
    <property type="project" value="TAIR"/>
</dbReference>
<dbReference type="GO" id="GO:0005524">
    <property type="term" value="F:ATP binding"/>
    <property type="evidence" value="ECO:0007669"/>
    <property type="project" value="UniProtKB-KW"/>
</dbReference>
<dbReference type="GO" id="GO:0008017">
    <property type="term" value="F:microtubule binding"/>
    <property type="evidence" value="ECO:0000314"/>
    <property type="project" value="UniProtKB"/>
</dbReference>
<dbReference type="GO" id="GO:0003777">
    <property type="term" value="F:microtubule motor activity"/>
    <property type="evidence" value="ECO:0000314"/>
    <property type="project" value="TAIR"/>
</dbReference>
<dbReference type="GO" id="GO:0031535">
    <property type="term" value="P:plus-end directed microtubule sliding"/>
    <property type="evidence" value="ECO:0000314"/>
    <property type="project" value="TAIR"/>
</dbReference>
<dbReference type="GO" id="GO:0047496">
    <property type="term" value="P:vesicle transport along microtubule"/>
    <property type="evidence" value="ECO:0000304"/>
    <property type="project" value="UniProtKB"/>
</dbReference>
<dbReference type="FunFam" id="3.40.850.10:FF:000068">
    <property type="entry name" value="p-loop containing nucleoside triphosphate hydrolase superfamily protein"/>
    <property type="match status" value="1"/>
</dbReference>
<dbReference type="Gene3D" id="3.40.850.10">
    <property type="entry name" value="Kinesin motor domain"/>
    <property type="match status" value="1"/>
</dbReference>
<dbReference type="InterPro" id="IPR027640">
    <property type="entry name" value="Kinesin-like_fam"/>
</dbReference>
<dbReference type="InterPro" id="IPR001752">
    <property type="entry name" value="Kinesin_motor_dom"/>
</dbReference>
<dbReference type="InterPro" id="IPR036961">
    <property type="entry name" value="Kinesin_motor_dom_sf"/>
</dbReference>
<dbReference type="InterPro" id="IPR027417">
    <property type="entry name" value="P-loop_NTPase"/>
</dbReference>
<dbReference type="PANTHER" id="PTHR24115:SF416">
    <property type="entry name" value="KINESIN-LIKE PROTEIN KIN-10A"/>
    <property type="match status" value="1"/>
</dbReference>
<dbReference type="PANTHER" id="PTHR24115">
    <property type="entry name" value="KINESIN-RELATED"/>
    <property type="match status" value="1"/>
</dbReference>
<dbReference type="Pfam" id="PF00225">
    <property type="entry name" value="Kinesin"/>
    <property type="match status" value="1"/>
</dbReference>
<dbReference type="PRINTS" id="PR00380">
    <property type="entry name" value="KINESINHEAVY"/>
</dbReference>
<dbReference type="SMART" id="SM00129">
    <property type="entry name" value="KISc"/>
    <property type="match status" value="1"/>
</dbReference>
<dbReference type="SUPFAM" id="SSF52540">
    <property type="entry name" value="P-loop containing nucleoside triphosphate hydrolases"/>
    <property type="match status" value="1"/>
</dbReference>
<dbReference type="PROSITE" id="PS50067">
    <property type="entry name" value="KINESIN_MOTOR_2"/>
    <property type="match status" value="1"/>
</dbReference>